<proteinExistence type="evidence at protein level"/>
<keyword id="KW-0119">Carbohydrate metabolism</keyword>
<keyword id="KW-0136">Cellulose degradation</keyword>
<keyword id="KW-0903">Direct protein sequencing</keyword>
<keyword id="KW-0326">Glycosidase</keyword>
<keyword id="KW-0378">Hydrolase</keyword>
<keyword id="KW-0624">Polysaccharide degradation</keyword>
<keyword id="KW-0964">Secreted</keyword>
<dbReference type="EC" id="3.2.1.4"/>
<dbReference type="GO" id="GO:0005576">
    <property type="term" value="C:extracellular region"/>
    <property type="evidence" value="ECO:0007669"/>
    <property type="project" value="UniProtKB-SubCell"/>
</dbReference>
<dbReference type="GO" id="GO:0008810">
    <property type="term" value="F:cellulase activity"/>
    <property type="evidence" value="ECO:0007669"/>
    <property type="project" value="UniProtKB-EC"/>
</dbReference>
<dbReference type="GO" id="GO:0030245">
    <property type="term" value="P:cellulose catabolic process"/>
    <property type="evidence" value="ECO:0007669"/>
    <property type="project" value="UniProtKB-KW"/>
</dbReference>
<name>GUN1_HYPRU</name>
<evidence type="ECO:0000269" key="1">
    <source ref="1"/>
</evidence>
<evidence type="ECO:0000303" key="2">
    <source ref="1"/>
</evidence>
<sequence>SYPNKQPYGPSGFWM</sequence>
<feature type="chain" id="PRO_0000315940" description="Endoglucanase 1">
    <location>
        <begin position="1"/>
        <end position="15" status="greater than"/>
    </location>
</feature>
<feature type="non-terminal residue" evidence="2">
    <location>
        <position position="15"/>
    </location>
</feature>
<organism>
    <name type="scientific">Hypocrea rufa</name>
    <name type="common">Trichoderma viride</name>
    <dbReference type="NCBI Taxonomy" id="5547"/>
    <lineage>
        <taxon>Eukaryota</taxon>
        <taxon>Fungi</taxon>
        <taxon>Dikarya</taxon>
        <taxon>Ascomycota</taxon>
        <taxon>Pezizomycotina</taxon>
        <taxon>Sordariomycetes</taxon>
        <taxon>Hypocreomycetidae</taxon>
        <taxon>Hypocreales</taxon>
        <taxon>Hypocreaceae</taxon>
        <taxon>Trichoderma</taxon>
    </lineage>
</organism>
<comment type="function">
    <text evidence="1">Has endoglucanase activity on carboxymethylcellulose (CMC).</text>
</comment>
<comment type="catalytic activity">
    <reaction evidence="1">
        <text>Endohydrolysis of (1-&gt;4)-beta-D-glucosidic linkages in cellulose, lichenin and cereal beta-D-glucans.</text>
        <dbReference type="EC" id="3.2.1.4"/>
    </reaction>
</comment>
<comment type="biophysicochemical properties">
    <phDependence>
        <text evidence="1">Optimum pH is 5.0.</text>
    </phDependence>
</comment>
<comment type="subcellular location">
    <subcellularLocation>
        <location evidence="1">Secreted</location>
    </subcellularLocation>
</comment>
<reference key="1">
    <citation type="submission" date="2007-07" db="UniProtKB">
        <title>Purification, characterization and N-terminal sequence analysis of novel endo-beta-1,4-D-glucanase from Trichoderma viride.</title>
        <authorList>
            <person name="Chaudhary N."/>
            <person name="Sharma B.C."/>
        </authorList>
    </citation>
    <scope>PROTEIN SEQUENCE</scope>
    <scope>FUNCTION</scope>
    <scope>CATALYTIC ACTIVITY</scope>
    <scope>SUBCELLULAR LOCATION</scope>
    <source>
        <strain evidence="1">MTCC 167</strain>
    </source>
</reference>
<protein>
    <recommendedName>
        <fullName>Endoglucanase 1</fullName>
        <ecNumber>3.2.1.4</ecNumber>
    </recommendedName>
    <alternativeName>
        <fullName>Endo-1,4-beta-D-glucanase 1</fullName>
    </alternativeName>
</protein>
<accession>P85218</accession>